<protein>
    <recommendedName>
        <fullName evidence="4">High-potential iron-sulfur protein</fullName>
        <shortName evidence="4">HiPIP</shortName>
    </recommendedName>
</protein>
<feature type="chain" id="PRO_0000415401" description="High-potential iron-sulfur protein">
    <location>
        <begin position="1"/>
        <end position="83"/>
    </location>
</feature>
<feature type="binding site" evidence="1 3">
    <location>
        <position position="43"/>
    </location>
    <ligand>
        <name>[4Fe-4S] cluster</name>
        <dbReference type="ChEBI" id="CHEBI:49883"/>
    </ligand>
</feature>
<feature type="binding site" evidence="1 3">
    <location>
        <position position="46"/>
    </location>
    <ligand>
        <name>[4Fe-4S] cluster</name>
        <dbReference type="ChEBI" id="CHEBI:49883"/>
    </ligand>
</feature>
<feature type="binding site" evidence="1 3">
    <location>
        <position position="61"/>
    </location>
    <ligand>
        <name>[4Fe-4S] cluster</name>
        <dbReference type="ChEBI" id="CHEBI:49883"/>
    </ligand>
</feature>
<feature type="binding site" evidence="1 3">
    <location>
        <position position="75"/>
    </location>
    <ligand>
        <name>[4Fe-4S] cluster</name>
        <dbReference type="ChEBI" id="CHEBI:49883"/>
    </ligand>
</feature>
<name>HIP_ISOBU</name>
<accession>B3EBZ5</accession>
<dbReference type="SMR" id="B3EBZ5"/>
<dbReference type="GO" id="GO:0042597">
    <property type="term" value="C:periplasmic space"/>
    <property type="evidence" value="ECO:0007669"/>
    <property type="project" value="UniProtKB-SubCell"/>
</dbReference>
<dbReference type="GO" id="GO:0051539">
    <property type="term" value="F:4 iron, 4 sulfur cluster binding"/>
    <property type="evidence" value="ECO:0007669"/>
    <property type="project" value="UniProtKB-KW"/>
</dbReference>
<dbReference type="GO" id="GO:0009055">
    <property type="term" value="F:electron transfer activity"/>
    <property type="evidence" value="ECO:0007669"/>
    <property type="project" value="InterPro"/>
</dbReference>
<dbReference type="GO" id="GO:0046872">
    <property type="term" value="F:metal ion binding"/>
    <property type="evidence" value="ECO:0007669"/>
    <property type="project" value="UniProtKB-KW"/>
</dbReference>
<dbReference type="GO" id="GO:0019646">
    <property type="term" value="P:aerobic electron transport chain"/>
    <property type="evidence" value="ECO:0007669"/>
    <property type="project" value="InterPro"/>
</dbReference>
<dbReference type="Gene3D" id="4.10.490.10">
    <property type="entry name" value="High potential iron-sulphur protein"/>
    <property type="match status" value="1"/>
</dbReference>
<dbReference type="InterPro" id="IPR000170">
    <property type="entry name" value="High_potential_FeS_prot"/>
</dbReference>
<dbReference type="InterPro" id="IPR036369">
    <property type="entry name" value="HIPIP_sf"/>
</dbReference>
<dbReference type="Pfam" id="PF01355">
    <property type="entry name" value="HIPIP"/>
    <property type="match status" value="1"/>
</dbReference>
<dbReference type="SUPFAM" id="SSF57652">
    <property type="entry name" value="HIPIP (high potential iron protein)"/>
    <property type="match status" value="1"/>
</dbReference>
<dbReference type="PROSITE" id="PS51373">
    <property type="entry name" value="HIPIP"/>
    <property type="match status" value="1"/>
</dbReference>
<keyword id="KW-0004">4Fe-4S</keyword>
<keyword id="KW-0903">Direct protein sequencing</keyword>
<keyword id="KW-0249">Electron transport</keyword>
<keyword id="KW-0408">Iron</keyword>
<keyword id="KW-0411">Iron-sulfur</keyword>
<keyword id="KW-0479">Metal-binding</keyword>
<keyword id="KW-0574">Periplasm</keyword>
<keyword id="KW-0813">Transport</keyword>
<sequence length="83" mass="9052">EVPADAVTESDPTAVALKYHRNAAESERVAAARPGLPPEEQHCENCQFMLPDQGADEWRGCSLFPGKLINLNGWCASWTLRAG</sequence>
<organism>
    <name type="scientific">Isochromatium buderi</name>
    <name type="common">Chromatium buderi</name>
    <dbReference type="NCBI Taxonomy" id="39440"/>
    <lineage>
        <taxon>Bacteria</taxon>
        <taxon>Pseudomonadati</taxon>
        <taxon>Pseudomonadota</taxon>
        <taxon>Gammaproteobacteria</taxon>
        <taxon>Chromatiales</taxon>
        <taxon>Chromatiaceae</taxon>
        <taxon>Isochromatium</taxon>
    </lineage>
</organism>
<reference evidence="5" key="1">
    <citation type="journal article" date="2003" name="J. Mol. Evol.">
        <title>Amino acid sequences and distribution of high-potential iron-sulfur proteins that donate electrons to the photosynthetic reaction center in phototropic proteobacteria.</title>
        <authorList>
            <person name="Van Driessche G."/>
            <person name="Vandenberghe I."/>
            <person name="Devreese B."/>
            <person name="Samyn B."/>
            <person name="Meyer T.E."/>
            <person name="Leigh R."/>
            <person name="Cusanovich M.A."/>
            <person name="Bartsch R.G."/>
            <person name="Fischer U."/>
            <person name="Van Beeumen J.J."/>
        </authorList>
    </citation>
    <scope>PROTEIN SEQUENCE</scope>
</reference>
<proteinExistence type="evidence at protein level"/>
<evidence type="ECO:0000250" key="1">
    <source>
        <dbReference type="UniProtKB" id="P00260"/>
    </source>
</evidence>
<evidence type="ECO:0000250" key="2">
    <source>
        <dbReference type="UniProtKB" id="P59860"/>
    </source>
</evidence>
<evidence type="ECO:0000255" key="3">
    <source>
        <dbReference type="PROSITE-ProRule" id="PRU00705"/>
    </source>
</evidence>
<evidence type="ECO:0000303" key="4">
    <source>
    </source>
</evidence>
<evidence type="ECO:0000305" key="5"/>
<comment type="function">
    <text evidence="1 3">Specific class of high-redox-potential 4Fe-4S ferredoxins. Functions in anaerobic electron transport in most purple and in some other photosynthetic bacteria and in at least one genus (Paracoccus) of halophilic, denitrifying bacteria.</text>
</comment>
<comment type="subunit">
    <text evidence="2">Homodimer.</text>
</comment>
<comment type="subcellular location">
    <subcellularLocation>
        <location evidence="1 3">Periplasm</location>
    </subcellularLocation>
</comment>
<comment type="similarity">
    <text evidence="3">Belongs to the high-potential iron-sulfur protein (HiPIP) family.</text>
</comment>